<proteinExistence type="inferred from homology"/>
<reference key="1">
    <citation type="journal article" date="2007" name="Proc. Natl. Acad. Sci. U.S.A.">
        <title>The genome of Syntrophus aciditrophicus: life at the thermodynamic limit of microbial growth.</title>
        <authorList>
            <person name="McInerney M.J."/>
            <person name="Rohlin L."/>
            <person name="Mouttaki H."/>
            <person name="Kim U."/>
            <person name="Krupp R.S."/>
            <person name="Rios-Hernandez L."/>
            <person name="Sieber J."/>
            <person name="Struchtemeyer C.G."/>
            <person name="Bhattacharyya A."/>
            <person name="Campbell J.W."/>
            <person name="Gunsalus R.P."/>
        </authorList>
    </citation>
    <scope>NUCLEOTIDE SEQUENCE [LARGE SCALE GENOMIC DNA]</scope>
    <source>
        <strain>SB</strain>
    </source>
</reference>
<organism>
    <name type="scientific">Syntrophus aciditrophicus (strain SB)</name>
    <dbReference type="NCBI Taxonomy" id="56780"/>
    <lineage>
        <taxon>Bacteria</taxon>
        <taxon>Pseudomonadati</taxon>
        <taxon>Thermodesulfobacteriota</taxon>
        <taxon>Syntrophia</taxon>
        <taxon>Syntrophales</taxon>
        <taxon>Syntrophaceae</taxon>
        <taxon>Syntrophus</taxon>
    </lineage>
</organism>
<sequence length="367" mass="39604">MSASFTTIAWRNDAVLLLDQQALPGEERYLTCTRFEEVLTAIRDLTVRGAPAIGVASAMGIALGALSLPDDSPEAFCNGFEALCDRFAQARPTARNLFWAVERMKRCFGEHFHPDTSSECSSAAPGKEIARTLAAVRKALVAEARRMAEEDVAINRRIGHYGQVLIRDGYRILTHCNAGALATAGYGTALGVIRAAREAGKQVQVFADETRPVLQGARLTAWELQKENIPVTLITDSMAGFLMKQGRIDCILVGADRIATNGDTANKIGTYTLAVLAAAHSVPLYVAAPLSTIDRKLSSGNEIPIEERPAEEILTIRGVPIAPAGVEVYNPAFDVTPGHYISAIITEAGIAEFPYESSLERLFLSFP</sequence>
<gene>
    <name evidence="1" type="primary">mtnA</name>
    <name type="ordered locus">SYNAS_29620</name>
    <name type="ORF">SYN_00310</name>
</gene>
<evidence type="ECO:0000255" key="1">
    <source>
        <dbReference type="HAMAP-Rule" id="MF_01678"/>
    </source>
</evidence>
<evidence type="ECO:0000305" key="2"/>
<dbReference type="EC" id="5.3.1.23" evidence="1"/>
<dbReference type="EMBL" id="CP000252">
    <property type="protein sequence ID" value="ABC78841.1"/>
    <property type="molecule type" value="Genomic_DNA"/>
</dbReference>
<dbReference type="RefSeq" id="WP_011418857.1">
    <property type="nucleotide sequence ID" value="NC_007759.1"/>
</dbReference>
<dbReference type="SMR" id="Q2LXN1"/>
<dbReference type="STRING" id="56780.SYN_00310"/>
<dbReference type="KEGG" id="sat:SYN_00310"/>
<dbReference type="eggNOG" id="COG0182">
    <property type="taxonomic scope" value="Bacteria"/>
</dbReference>
<dbReference type="HOGENOM" id="CLU_016218_1_2_7"/>
<dbReference type="InParanoid" id="Q2LXN1"/>
<dbReference type="OrthoDB" id="9803436at2"/>
<dbReference type="UniPathway" id="UPA00904">
    <property type="reaction ID" value="UER00874"/>
</dbReference>
<dbReference type="Proteomes" id="UP000001933">
    <property type="component" value="Chromosome"/>
</dbReference>
<dbReference type="GO" id="GO:0046523">
    <property type="term" value="F:S-methyl-5-thioribose-1-phosphate isomerase activity"/>
    <property type="evidence" value="ECO:0007669"/>
    <property type="project" value="UniProtKB-UniRule"/>
</dbReference>
<dbReference type="GO" id="GO:0019509">
    <property type="term" value="P:L-methionine salvage from methylthioadenosine"/>
    <property type="evidence" value="ECO:0007669"/>
    <property type="project" value="UniProtKB-UniRule"/>
</dbReference>
<dbReference type="FunFam" id="1.20.120.420:FF:000003">
    <property type="entry name" value="Methylthioribose-1-phosphate isomerase"/>
    <property type="match status" value="1"/>
</dbReference>
<dbReference type="FunFam" id="3.40.50.10470:FF:000006">
    <property type="entry name" value="Methylthioribose-1-phosphate isomerase"/>
    <property type="match status" value="1"/>
</dbReference>
<dbReference type="Gene3D" id="1.20.120.420">
    <property type="entry name" value="translation initiation factor eif-2b, domain 1"/>
    <property type="match status" value="1"/>
</dbReference>
<dbReference type="Gene3D" id="3.40.50.10470">
    <property type="entry name" value="Translation initiation factor eif-2b, domain 2"/>
    <property type="match status" value="1"/>
</dbReference>
<dbReference type="HAMAP" id="MF_01678">
    <property type="entry name" value="Salvage_MtnA"/>
    <property type="match status" value="1"/>
</dbReference>
<dbReference type="InterPro" id="IPR000649">
    <property type="entry name" value="IF-2B-related"/>
</dbReference>
<dbReference type="InterPro" id="IPR005251">
    <property type="entry name" value="IF-M1Pi"/>
</dbReference>
<dbReference type="InterPro" id="IPR042529">
    <property type="entry name" value="IF_2B-like_C"/>
</dbReference>
<dbReference type="InterPro" id="IPR011559">
    <property type="entry name" value="Initiation_fac_2B_a/b/d"/>
</dbReference>
<dbReference type="InterPro" id="IPR027363">
    <property type="entry name" value="M1Pi_N"/>
</dbReference>
<dbReference type="InterPro" id="IPR037171">
    <property type="entry name" value="NagB/RpiA_transferase-like"/>
</dbReference>
<dbReference type="NCBIfam" id="TIGR00524">
    <property type="entry name" value="eIF-2B_rel"/>
    <property type="match status" value="1"/>
</dbReference>
<dbReference type="NCBIfam" id="NF004326">
    <property type="entry name" value="PRK05720.1"/>
    <property type="match status" value="1"/>
</dbReference>
<dbReference type="NCBIfam" id="TIGR00512">
    <property type="entry name" value="salvage_mtnA"/>
    <property type="match status" value="1"/>
</dbReference>
<dbReference type="PANTHER" id="PTHR43475">
    <property type="entry name" value="METHYLTHIORIBOSE-1-PHOSPHATE ISOMERASE"/>
    <property type="match status" value="1"/>
</dbReference>
<dbReference type="PANTHER" id="PTHR43475:SF1">
    <property type="entry name" value="METHYLTHIORIBOSE-1-PHOSPHATE ISOMERASE"/>
    <property type="match status" value="1"/>
</dbReference>
<dbReference type="Pfam" id="PF01008">
    <property type="entry name" value="IF-2B"/>
    <property type="match status" value="1"/>
</dbReference>
<dbReference type="SUPFAM" id="SSF100950">
    <property type="entry name" value="NagB/RpiA/CoA transferase-like"/>
    <property type="match status" value="1"/>
</dbReference>
<comment type="function">
    <text evidence="1">Catalyzes the interconversion of methylthioribose-1-phosphate (MTR-1-P) into methylthioribulose-1-phosphate (MTRu-1-P).</text>
</comment>
<comment type="catalytic activity">
    <reaction evidence="1">
        <text>5-(methylsulfanyl)-alpha-D-ribose 1-phosphate = 5-(methylsulfanyl)-D-ribulose 1-phosphate</text>
        <dbReference type="Rhea" id="RHEA:19989"/>
        <dbReference type="ChEBI" id="CHEBI:58533"/>
        <dbReference type="ChEBI" id="CHEBI:58548"/>
        <dbReference type="EC" id="5.3.1.23"/>
    </reaction>
</comment>
<comment type="pathway">
    <text evidence="1">Amino-acid biosynthesis; L-methionine biosynthesis via salvage pathway; L-methionine from S-methyl-5-thio-alpha-D-ribose 1-phosphate: step 1/6.</text>
</comment>
<comment type="similarity">
    <text evidence="2">Belongs to the eIF-2B alpha/beta/delta subunits family. MtnA subfamily.</text>
</comment>
<feature type="chain" id="PRO_0000357255" description="Methylthioribose-1-phosphate isomerase">
    <location>
        <begin position="1"/>
        <end position="367"/>
    </location>
</feature>
<feature type="active site" description="Proton donor" evidence="1">
    <location>
        <position position="256"/>
    </location>
</feature>
<feature type="binding site" evidence="1">
    <location>
        <begin position="48"/>
        <end position="50"/>
    </location>
    <ligand>
        <name>substrate</name>
    </ligand>
</feature>
<feature type="binding site" evidence="1">
    <location>
        <position position="91"/>
    </location>
    <ligand>
        <name>substrate</name>
    </ligand>
</feature>
<feature type="binding site" evidence="1">
    <location>
        <position position="215"/>
    </location>
    <ligand>
        <name>substrate</name>
    </ligand>
</feature>
<feature type="binding site" evidence="1">
    <location>
        <begin position="266"/>
        <end position="267"/>
    </location>
    <ligand>
        <name>substrate</name>
    </ligand>
</feature>
<feature type="site" description="Transition state stabilizer" evidence="1">
    <location>
        <position position="176"/>
    </location>
</feature>
<protein>
    <recommendedName>
        <fullName evidence="1">Methylthioribose-1-phosphate isomerase</fullName>
        <shortName evidence="1">M1Pi</shortName>
        <shortName evidence="1">MTR-1-P isomerase</shortName>
        <ecNumber evidence="1">5.3.1.23</ecNumber>
    </recommendedName>
    <alternativeName>
        <fullName evidence="1">S-methyl-5-thioribose-1-phosphate isomerase</fullName>
    </alternativeName>
</protein>
<keyword id="KW-0028">Amino-acid biosynthesis</keyword>
<keyword id="KW-0413">Isomerase</keyword>
<keyword id="KW-0486">Methionine biosynthesis</keyword>
<keyword id="KW-1185">Reference proteome</keyword>
<accession>Q2LXN1</accession>
<name>MTNA_SYNAS</name>